<feature type="chain" id="PRO_1000137319" description="Redox-sensing transcriptional repressor Rex">
    <location>
        <begin position="1"/>
        <end position="209"/>
    </location>
</feature>
<feature type="DNA-binding region" description="H-T-H motif" evidence="1">
    <location>
        <begin position="16"/>
        <end position="55"/>
    </location>
</feature>
<feature type="binding site" evidence="1">
    <location>
        <begin position="90"/>
        <end position="95"/>
    </location>
    <ligand>
        <name>NAD(+)</name>
        <dbReference type="ChEBI" id="CHEBI:57540"/>
    </ligand>
</feature>
<accession>B7HS01</accession>
<keyword id="KW-0963">Cytoplasm</keyword>
<keyword id="KW-0238">DNA-binding</keyword>
<keyword id="KW-0520">NAD</keyword>
<keyword id="KW-0678">Repressor</keyword>
<keyword id="KW-0804">Transcription</keyword>
<keyword id="KW-0805">Transcription regulation</keyword>
<comment type="function">
    <text evidence="1">Modulates transcription in response to changes in cellular NADH/NAD(+) redox state.</text>
</comment>
<comment type="subunit">
    <text evidence="1">Homodimer.</text>
</comment>
<comment type="subcellular location">
    <subcellularLocation>
        <location evidence="1">Cytoplasm</location>
    </subcellularLocation>
</comment>
<comment type="similarity">
    <text evidence="1">Belongs to the transcriptional regulatory Rex family.</text>
</comment>
<protein>
    <recommendedName>
        <fullName evidence="1">Redox-sensing transcriptional repressor Rex</fullName>
    </recommendedName>
</protein>
<evidence type="ECO:0000255" key="1">
    <source>
        <dbReference type="HAMAP-Rule" id="MF_01131"/>
    </source>
</evidence>
<sequence>MEQQKIPQATAKRLPLYYRFIQNLSLSGKQRVSSAELSEAVKVDSATIRRDFSYFGALGKKGYGYNVNYLLSFFRETLDQDDITRVALIGVGNLGTAFLHYNFTKNNNTKIEMAFDVSEEKVGTEIGGIPVYHLDELEERLSNDIQVAILTVPATVAQSVADRLAETNVHGILNFTPARLNVSENIRIHHIDLAVELQTLVYFLKNYPQ</sequence>
<gene>
    <name evidence="1" type="primary">rex</name>
    <name type="ordered locus">BCAH187_A0313</name>
</gene>
<dbReference type="EMBL" id="CP001177">
    <property type="protein sequence ID" value="ACJ82445.1"/>
    <property type="molecule type" value="Genomic_DNA"/>
</dbReference>
<dbReference type="SMR" id="B7HS01"/>
<dbReference type="KEGG" id="bcr:BCAH187_A0313"/>
<dbReference type="HOGENOM" id="CLU_061534_1_1_9"/>
<dbReference type="Proteomes" id="UP000002214">
    <property type="component" value="Chromosome"/>
</dbReference>
<dbReference type="GO" id="GO:0005737">
    <property type="term" value="C:cytoplasm"/>
    <property type="evidence" value="ECO:0007669"/>
    <property type="project" value="UniProtKB-SubCell"/>
</dbReference>
<dbReference type="GO" id="GO:0003677">
    <property type="term" value="F:DNA binding"/>
    <property type="evidence" value="ECO:0007669"/>
    <property type="project" value="UniProtKB-UniRule"/>
</dbReference>
<dbReference type="GO" id="GO:0003700">
    <property type="term" value="F:DNA-binding transcription factor activity"/>
    <property type="evidence" value="ECO:0007669"/>
    <property type="project" value="UniProtKB-UniRule"/>
</dbReference>
<dbReference type="GO" id="GO:0045892">
    <property type="term" value="P:negative regulation of DNA-templated transcription"/>
    <property type="evidence" value="ECO:0007669"/>
    <property type="project" value="InterPro"/>
</dbReference>
<dbReference type="GO" id="GO:0051775">
    <property type="term" value="P:response to redox state"/>
    <property type="evidence" value="ECO:0007669"/>
    <property type="project" value="InterPro"/>
</dbReference>
<dbReference type="Gene3D" id="3.40.50.720">
    <property type="entry name" value="NAD(P)-binding Rossmann-like Domain"/>
    <property type="match status" value="1"/>
</dbReference>
<dbReference type="Gene3D" id="1.10.10.10">
    <property type="entry name" value="Winged helix-like DNA-binding domain superfamily/Winged helix DNA-binding domain"/>
    <property type="match status" value="1"/>
</dbReference>
<dbReference type="HAMAP" id="MF_01131">
    <property type="entry name" value="Rex"/>
    <property type="match status" value="1"/>
</dbReference>
<dbReference type="InterPro" id="IPR003781">
    <property type="entry name" value="CoA-bd"/>
</dbReference>
<dbReference type="InterPro" id="IPR036291">
    <property type="entry name" value="NAD(P)-bd_dom_sf"/>
</dbReference>
<dbReference type="InterPro" id="IPR009718">
    <property type="entry name" value="Rex_DNA-bd_C_dom"/>
</dbReference>
<dbReference type="InterPro" id="IPR022876">
    <property type="entry name" value="Tscrpt_rep_Rex"/>
</dbReference>
<dbReference type="InterPro" id="IPR036388">
    <property type="entry name" value="WH-like_DNA-bd_sf"/>
</dbReference>
<dbReference type="InterPro" id="IPR036390">
    <property type="entry name" value="WH_DNA-bd_sf"/>
</dbReference>
<dbReference type="NCBIfam" id="NF003989">
    <property type="entry name" value="PRK05472.1-3"/>
    <property type="match status" value="1"/>
</dbReference>
<dbReference type="NCBIfam" id="NF003991">
    <property type="entry name" value="PRK05472.1-5"/>
    <property type="match status" value="1"/>
</dbReference>
<dbReference type="NCBIfam" id="NF003994">
    <property type="entry name" value="PRK05472.2-3"/>
    <property type="match status" value="1"/>
</dbReference>
<dbReference type="NCBIfam" id="NF003995">
    <property type="entry name" value="PRK05472.2-4"/>
    <property type="match status" value="1"/>
</dbReference>
<dbReference type="NCBIfam" id="NF003996">
    <property type="entry name" value="PRK05472.2-5"/>
    <property type="match status" value="1"/>
</dbReference>
<dbReference type="PANTHER" id="PTHR35786">
    <property type="entry name" value="REDOX-SENSING TRANSCRIPTIONAL REPRESSOR REX"/>
    <property type="match status" value="1"/>
</dbReference>
<dbReference type="PANTHER" id="PTHR35786:SF1">
    <property type="entry name" value="REDOX-SENSING TRANSCRIPTIONAL REPRESSOR REX 1"/>
    <property type="match status" value="1"/>
</dbReference>
<dbReference type="Pfam" id="PF02629">
    <property type="entry name" value="CoA_binding"/>
    <property type="match status" value="1"/>
</dbReference>
<dbReference type="Pfam" id="PF06971">
    <property type="entry name" value="Put_DNA-bind_N"/>
    <property type="match status" value="1"/>
</dbReference>
<dbReference type="SMART" id="SM00881">
    <property type="entry name" value="CoA_binding"/>
    <property type="match status" value="1"/>
</dbReference>
<dbReference type="SUPFAM" id="SSF51735">
    <property type="entry name" value="NAD(P)-binding Rossmann-fold domains"/>
    <property type="match status" value="1"/>
</dbReference>
<dbReference type="SUPFAM" id="SSF46785">
    <property type="entry name" value="Winged helix' DNA-binding domain"/>
    <property type="match status" value="1"/>
</dbReference>
<organism>
    <name type="scientific">Bacillus cereus (strain AH187)</name>
    <dbReference type="NCBI Taxonomy" id="405534"/>
    <lineage>
        <taxon>Bacteria</taxon>
        <taxon>Bacillati</taxon>
        <taxon>Bacillota</taxon>
        <taxon>Bacilli</taxon>
        <taxon>Bacillales</taxon>
        <taxon>Bacillaceae</taxon>
        <taxon>Bacillus</taxon>
        <taxon>Bacillus cereus group</taxon>
    </lineage>
</organism>
<proteinExistence type="inferred from homology"/>
<name>REX_BACC7</name>
<reference key="1">
    <citation type="submission" date="2008-10" db="EMBL/GenBank/DDBJ databases">
        <title>Genome sequence of Bacillus cereus AH187.</title>
        <authorList>
            <person name="Dodson R.J."/>
            <person name="Durkin A.S."/>
            <person name="Rosovitz M.J."/>
            <person name="Rasko D.A."/>
            <person name="Kolsto A.B."/>
            <person name="Okstad O.A."/>
            <person name="Ravel J."/>
            <person name="Sutton G."/>
        </authorList>
    </citation>
    <scope>NUCLEOTIDE SEQUENCE [LARGE SCALE GENOMIC DNA]</scope>
    <source>
        <strain>AH187</strain>
    </source>
</reference>